<accession>Q9CNG9</accession>
<protein>
    <recommendedName>
        <fullName evidence="1">Glutamate-1-semialdehyde 2,1-aminomutase</fullName>
        <shortName evidence="1">GSA</shortName>
        <ecNumber evidence="1">5.4.3.8</ecNumber>
    </recommendedName>
    <alternativeName>
        <fullName evidence="1">Glutamate-1-semialdehyde aminotransferase</fullName>
        <shortName evidence="1">GSA-AT</shortName>
    </alternativeName>
</protein>
<feature type="chain" id="PRO_0000120429" description="Glutamate-1-semialdehyde 2,1-aminomutase">
    <location>
        <begin position="1"/>
        <end position="427"/>
    </location>
</feature>
<feature type="modified residue" description="N6-(pyridoxal phosphate)lysine" evidence="1">
    <location>
        <position position="265"/>
    </location>
</feature>
<organism>
    <name type="scientific">Pasteurella multocida (strain Pm70)</name>
    <dbReference type="NCBI Taxonomy" id="272843"/>
    <lineage>
        <taxon>Bacteria</taxon>
        <taxon>Pseudomonadati</taxon>
        <taxon>Pseudomonadota</taxon>
        <taxon>Gammaproteobacteria</taxon>
        <taxon>Pasteurellales</taxon>
        <taxon>Pasteurellaceae</taxon>
        <taxon>Pasteurella</taxon>
    </lineage>
</organism>
<keyword id="KW-0963">Cytoplasm</keyword>
<keyword id="KW-0413">Isomerase</keyword>
<keyword id="KW-0627">Porphyrin biosynthesis</keyword>
<keyword id="KW-0663">Pyridoxal phosphate</keyword>
<keyword id="KW-1185">Reference proteome</keyword>
<name>GSA_PASMU</name>
<evidence type="ECO:0000255" key="1">
    <source>
        <dbReference type="HAMAP-Rule" id="MF_00375"/>
    </source>
</evidence>
<dbReference type="EC" id="5.4.3.8" evidence="1"/>
<dbReference type="EMBL" id="AE004439">
    <property type="protein sequence ID" value="AAK02546.1"/>
    <property type="molecule type" value="Genomic_DNA"/>
</dbReference>
<dbReference type="RefSeq" id="WP_005721785.1">
    <property type="nucleotide sequence ID" value="NC_002663.1"/>
</dbReference>
<dbReference type="SMR" id="Q9CNG9"/>
<dbReference type="STRING" id="272843.PM0462"/>
<dbReference type="EnsemblBacteria" id="AAK02546">
    <property type="protein sequence ID" value="AAK02546"/>
    <property type="gene ID" value="PM0462"/>
</dbReference>
<dbReference type="GeneID" id="77208221"/>
<dbReference type="KEGG" id="pmu:PM0462"/>
<dbReference type="PATRIC" id="fig|272843.6.peg.474"/>
<dbReference type="HOGENOM" id="CLU_016922_1_5_6"/>
<dbReference type="OrthoDB" id="9801052at2"/>
<dbReference type="UniPathway" id="UPA00251">
    <property type="reaction ID" value="UER00317"/>
</dbReference>
<dbReference type="Proteomes" id="UP000000809">
    <property type="component" value="Chromosome"/>
</dbReference>
<dbReference type="GO" id="GO:0005737">
    <property type="term" value="C:cytoplasm"/>
    <property type="evidence" value="ECO:0007669"/>
    <property type="project" value="UniProtKB-SubCell"/>
</dbReference>
<dbReference type="GO" id="GO:0042286">
    <property type="term" value="F:glutamate-1-semialdehyde 2,1-aminomutase activity"/>
    <property type="evidence" value="ECO:0007669"/>
    <property type="project" value="UniProtKB-UniRule"/>
</dbReference>
<dbReference type="GO" id="GO:0030170">
    <property type="term" value="F:pyridoxal phosphate binding"/>
    <property type="evidence" value="ECO:0007669"/>
    <property type="project" value="InterPro"/>
</dbReference>
<dbReference type="GO" id="GO:0008483">
    <property type="term" value="F:transaminase activity"/>
    <property type="evidence" value="ECO:0007669"/>
    <property type="project" value="InterPro"/>
</dbReference>
<dbReference type="GO" id="GO:0006782">
    <property type="term" value="P:protoporphyrinogen IX biosynthetic process"/>
    <property type="evidence" value="ECO:0007669"/>
    <property type="project" value="UniProtKB-UniRule"/>
</dbReference>
<dbReference type="CDD" id="cd00610">
    <property type="entry name" value="OAT_like"/>
    <property type="match status" value="1"/>
</dbReference>
<dbReference type="FunFam" id="3.40.640.10:FF:000021">
    <property type="entry name" value="Glutamate-1-semialdehyde 2,1-aminomutase"/>
    <property type="match status" value="1"/>
</dbReference>
<dbReference type="Gene3D" id="3.90.1150.10">
    <property type="entry name" value="Aspartate Aminotransferase, domain 1"/>
    <property type="match status" value="1"/>
</dbReference>
<dbReference type="Gene3D" id="3.40.640.10">
    <property type="entry name" value="Type I PLP-dependent aspartate aminotransferase-like (Major domain)"/>
    <property type="match status" value="1"/>
</dbReference>
<dbReference type="HAMAP" id="MF_00375">
    <property type="entry name" value="HemL_aminotrans_3"/>
    <property type="match status" value="1"/>
</dbReference>
<dbReference type="InterPro" id="IPR004639">
    <property type="entry name" value="4pyrrol_synth_GluAld_NH2Trfase"/>
</dbReference>
<dbReference type="InterPro" id="IPR005814">
    <property type="entry name" value="Aminotrans_3"/>
</dbReference>
<dbReference type="InterPro" id="IPR049704">
    <property type="entry name" value="Aminotrans_3_PPA_site"/>
</dbReference>
<dbReference type="InterPro" id="IPR015424">
    <property type="entry name" value="PyrdxlP-dep_Trfase"/>
</dbReference>
<dbReference type="InterPro" id="IPR015421">
    <property type="entry name" value="PyrdxlP-dep_Trfase_major"/>
</dbReference>
<dbReference type="InterPro" id="IPR015422">
    <property type="entry name" value="PyrdxlP-dep_Trfase_small"/>
</dbReference>
<dbReference type="NCBIfam" id="TIGR00713">
    <property type="entry name" value="hemL"/>
    <property type="match status" value="1"/>
</dbReference>
<dbReference type="NCBIfam" id="NF000818">
    <property type="entry name" value="PRK00062.1"/>
    <property type="match status" value="1"/>
</dbReference>
<dbReference type="PANTHER" id="PTHR43713">
    <property type="entry name" value="GLUTAMATE-1-SEMIALDEHYDE 2,1-AMINOMUTASE"/>
    <property type="match status" value="1"/>
</dbReference>
<dbReference type="PANTHER" id="PTHR43713:SF3">
    <property type="entry name" value="GLUTAMATE-1-SEMIALDEHYDE 2,1-AMINOMUTASE 1, CHLOROPLASTIC-RELATED"/>
    <property type="match status" value="1"/>
</dbReference>
<dbReference type="Pfam" id="PF00202">
    <property type="entry name" value="Aminotran_3"/>
    <property type="match status" value="1"/>
</dbReference>
<dbReference type="SUPFAM" id="SSF53383">
    <property type="entry name" value="PLP-dependent transferases"/>
    <property type="match status" value="1"/>
</dbReference>
<dbReference type="PROSITE" id="PS00600">
    <property type="entry name" value="AA_TRANSFER_CLASS_3"/>
    <property type="match status" value="1"/>
</dbReference>
<reference key="1">
    <citation type="journal article" date="2001" name="Proc. Natl. Acad. Sci. U.S.A.">
        <title>Complete genomic sequence of Pasteurella multocida Pm70.</title>
        <authorList>
            <person name="May B.J."/>
            <person name="Zhang Q."/>
            <person name="Li L.L."/>
            <person name="Paustian M.L."/>
            <person name="Whittam T.S."/>
            <person name="Kapur V."/>
        </authorList>
    </citation>
    <scope>NUCLEOTIDE SEQUENCE [LARGE SCALE GENOMIC DNA]</scope>
    <source>
        <strain>Pm70</strain>
    </source>
</reference>
<proteinExistence type="inferred from homology"/>
<comment type="catalytic activity">
    <reaction evidence="1">
        <text>(S)-4-amino-5-oxopentanoate = 5-aminolevulinate</text>
        <dbReference type="Rhea" id="RHEA:14265"/>
        <dbReference type="ChEBI" id="CHEBI:57501"/>
        <dbReference type="ChEBI" id="CHEBI:356416"/>
        <dbReference type="EC" id="5.4.3.8"/>
    </reaction>
</comment>
<comment type="cofactor">
    <cofactor evidence="1">
        <name>pyridoxal 5'-phosphate</name>
        <dbReference type="ChEBI" id="CHEBI:597326"/>
    </cofactor>
</comment>
<comment type="pathway">
    <text evidence="1">Porphyrin-containing compound metabolism; protoporphyrin-IX biosynthesis; 5-aminolevulinate from L-glutamyl-tRNA(Glu): step 2/2.</text>
</comment>
<comment type="subunit">
    <text evidence="1">Homodimer.</text>
</comment>
<comment type="subcellular location">
    <subcellularLocation>
        <location evidence="1">Cytoplasm</location>
    </subcellularLocation>
</comment>
<comment type="similarity">
    <text evidence="1">Belongs to the class-III pyridoxal-phosphate-dependent aminotransferase family. HemL subfamily.</text>
</comment>
<sequence length="427" mass="45513">MTTSLSLFQRAQHRIPGGVNSPVRAFKGVGGTPIFIEKAQGAYLYDTEGNQYIDYVGSWGPMILGHNHPTILDAVISTAQNGLSFGAPTALEIELAELVCSLVPSIDMVRMVSSGTEATMSAIRLARGYTKRDKIIKFEGCYHGHADSLLVKAGSGALTLGQPSSPGVPADFAKHTLTCTYNDLDSVKHAFEQYPNEIACLIVEPVAGNMNCIPPQEGFLQGLRALCDQYGAVFIIDEVMTGFRVALGGAQTYYGVTPDLTCLGKVIGGGMPVGAFGGKKAIMQHIAPLGPVYQAGTLSGNPIAMAAGLACLTELKKAGNAQRLAQQTEKLALGLKALADKHHVPFVVNYVGGMFGIFFTEQKTVSSYQAVMACDTEKFNRFFHAMLAQGIYLAPSAFEAGFMSLAHSDQDIERTLQAADQVFSQLA</sequence>
<gene>
    <name evidence="1" type="primary">hemL</name>
    <name type="ordered locus">PM0462</name>
</gene>